<gene>
    <name evidence="7" type="primary">lin-8</name>
    <name evidence="7" type="ORF">B0454.1</name>
</gene>
<name>LIN8_CAEEL</name>
<keyword id="KW-0217">Developmental protein</keyword>
<keyword id="KW-0539">Nucleus</keyword>
<keyword id="KW-1185">Reference proteome</keyword>
<protein>
    <recommendedName>
        <fullName evidence="4">Protein lin-8</fullName>
    </recommendedName>
    <alternativeName>
        <fullName evidence="7">Abnormal cell lineage protein 8</fullName>
    </alternativeName>
</protein>
<evidence type="ECO:0000256" key="1">
    <source>
        <dbReference type="SAM" id="MobiDB-lite"/>
    </source>
</evidence>
<evidence type="ECO:0000269" key="2">
    <source>
    </source>
</evidence>
<evidence type="ECO:0000269" key="3">
    <source>
    </source>
</evidence>
<evidence type="ECO:0000305" key="4"/>
<evidence type="ECO:0000312" key="5">
    <source>
        <dbReference type="EMBL" id="AAZ77787.1"/>
    </source>
</evidence>
<evidence type="ECO:0000312" key="6">
    <source>
        <dbReference type="Proteomes" id="UP000001940"/>
    </source>
</evidence>
<evidence type="ECO:0000312" key="7">
    <source>
        <dbReference type="WormBase" id="B0454.1"/>
    </source>
</evidence>
<proteinExistence type="evidence at protein level"/>
<feature type="chain" id="PRO_0000438591" description="Protein lin-8">
    <location>
        <begin position="1"/>
        <end position="386"/>
    </location>
</feature>
<feature type="region of interest" description="Sufficient for interaction with lin-35" evidence="2">
    <location>
        <begin position="175"/>
        <end position="285"/>
    </location>
</feature>
<feature type="region of interest" description="Disordered" evidence="1">
    <location>
        <begin position="212"/>
        <end position="240"/>
    </location>
</feature>
<feature type="compositionally biased region" description="Low complexity" evidence="1">
    <location>
        <begin position="229"/>
        <end position="240"/>
    </location>
</feature>
<feature type="mutagenesis site" description="In n111; multivulva phenotype in a lin-15B n2245, lin-52 n771, lin-9 n112, lin-35 n745 or lin-37 n758 mutant background. Increased lin-3 mRNA levels in a lin-35 n745 mutant background as compared to wild-type." evidence="2 3">
    <original>L</original>
    <variation>P</variation>
    <location>
        <position position="20"/>
    </location>
</feature>
<feature type="mutagenesis site" description="In n2741; temperature-sensitive multivulva phenotype in a lin-15B n2245 or lin-52 n771 mutant background." evidence="2">
    <original>V</original>
    <variation>M</variation>
    <location>
        <position position="68"/>
    </location>
</feature>
<feature type="mutagenesis site" description="In n2376; temperature-sensitive multivulva phenotype in a lin-15B n2245 or lin-52 n771 mutant background." evidence="2">
    <original>E</original>
    <variation>K</variation>
    <location>
        <position position="148"/>
    </location>
</feature>
<feature type="mutagenesis site" description="In n2378; multivulva phenotype in a lin-15B n2245, lin-52 n771 or lin-36 n766 mutant background." evidence="2 3">
    <original>R</original>
    <variation>C</variation>
    <location>
        <position position="154"/>
    </location>
</feature>
<feature type="mutagenesis site" description="In n2403; temperature-sensitive multivulva phenotype in a lin-15B n2245 or lin-52 n771 mutant background." evidence="2">
    <original>E</original>
    <variation>K</variation>
    <location>
        <position position="164"/>
    </location>
</feature>
<accession>G5EDW7</accession>
<reference evidence="5" key="1">
    <citation type="journal article" date="2005" name="Genetics">
        <title>lin-8, which antagonizes Caenorhabditis elegans Ras-mediated vulval induction, encodes a novel nuclear protein that interacts with the LIN-35 Rb protein.</title>
        <authorList>
            <person name="Davison E.M."/>
            <person name="Harrison M.M."/>
            <person name="Walhout A.J."/>
            <person name="Vidal M."/>
            <person name="Horvitz H.R."/>
        </authorList>
    </citation>
    <scope>NUCLEOTIDE SEQUENCE [MRNA]</scope>
    <scope>FUNCTION</scope>
    <scope>INTERACTION WITH LIN-35</scope>
    <scope>SUBCELLULAR LOCATION</scope>
    <scope>TISSUE SPECIFICITY</scope>
    <scope>DISRUPTION PHENOTYPE</scope>
    <scope>MUTAGENESIS OF LEU-20; VAL-68; GLU-148; ARG-154 AND GLU-164</scope>
</reference>
<reference evidence="6" key="2">
    <citation type="journal article" date="1998" name="Science">
        <title>Genome sequence of the nematode C. elegans: a platform for investigating biology.</title>
        <authorList>
            <consortium name="The C. elegans sequencing consortium"/>
        </authorList>
    </citation>
    <scope>NUCLEOTIDE SEQUENCE [LARGE SCALE GENOMIC DNA]</scope>
    <source>
        <strain evidence="6">Bristol N2</strain>
    </source>
</reference>
<reference evidence="4" key="3">
    <citation type="journal article" date="2006" name="Dev. Cell">
        <title>SynMuv genes redundantly inhibit lin-3/EGF expression to prevent inappropriate vulval induction in C. elegans.</title>
        <authorList>
            <person name="Cui M."/>
            <person name="Chen J."/>
            <person name="Myers T.R."/>
            <person name="Hwang B.J."/>
            <person name="Sternberg P.W."/>
            <person name="Greenwald I."/>
            <person name="Han M."/>
        </authorList>
    </citation>
    <scope>FUNCTION</scope>
    <scope>MUTAGENESIS OF LEU-20 AND ARG-154</scope>
</reference>
<organism evidence="6">
    <name type="scientific">Caenorhabditis elegans</name>
    <dbReference type="NCBI Taxonomy" id="6239"/>
    <lineage>
        <taxon>Eukaryota</taxon>
        <taxon>Metazoa</taxon>
        <taxon>Ecdysozoa</taxon>
        <taxon>Nematoda</taxon>
        <taxon>Chromadorea</taxon>
        <taxon>Rhabditida</taxon>
        <taxon>Rhabditina</taxon>
        <taxon>Rhabditomorpha</taxon>
        <taxon>Rhabditoidea</taxon>
        <taxon>Rhabditidae</taxon>
        <taxon>Peloderinae</taxon>
        <taxon>Caenorhabditis</taxon>
    </lineage>
</organism>
<comment type="function">
    <text evidence="2 3">Acts as a synthetic multivulva class A (synMuvA) protein and redundantly inhibits lin-3/EGF expression to prevent inappropriate vulva induction.</text>
</comment>
<comment type="subunit">
    <text evidence="2">Interacts with lin-35 (via C-terminus).</text>
</comment>
<comment type="subcellular location">
    <subcellularLocation>
        <location evidence="2">Nucleus</location>
    </subcellularLocation>
</comment>
<comment type="tissue specificity">
    <text evidence="2">Widely expressed throughout development, with particularly prominent expression in the germline and in neuronal nuclei of the head (at protein level).</text>
</comment>
<comment type="disruption phenotype">
    <text evidence="2">Temperature-sensitive multivulva phenotype in a lin-15B n2245 or lin-52 n771 mutant background.</text>
</comment>
<comment type="similarity">
    <text evidence="4">Belongs to the lin-8 family.</text>
</comment>
<sequence>MSKIKTHSTGSKRTVPFYKLPPPVPLPPLPPPDPTRYFSTEKYIALSKDEKFKFDDYDVNDETLKKVVLNEIGKCPDIWSSRSQAAIMEHYPIVATETYRRTGLLLSIKSLKQIYKCGKDNLRNRLRVAIVSKRLTPAQVEAYMWRWEFYGFIRYYRDYTQRWEADLLKDLDVVLGLEARRASKNMEKVDSGELMEPMEPMDSTMDEMCVEEEPYEETGSNWSDPAPEPSQSKSQSPEAKYPQAYLLPEADEVYNPDDFYQEEHESASNAMYRIAFSQQYGGGGSPAVQKPVTFSAQPAPAPVREAPSPVVENVSSSSFTPKPPAMINNFGEEMNQITYQAIRIAREQPERLKLLRKALFDVVLAFDQKEYADVGDLYRDLAQKNS</sequence>
<dbReference type="EMBL" id="DQ150101">
    <property type="protein sequence ID" value="AAZ77787.1"/>
    <property type="molecule type" value="mRNA"/>
</dbReference>
<dbReference type="EMBL" id="BX284602">
    <property type="protein sequence ID" value="CCD61967.1"/>
    <property type="molecule type" value="Genomic_DNA"/>
</dbReference>
<dbReference type="RefSeq" id="NP_494436.1">
    <property type="nucleotide sequence ID" value="NM_062035.7"/>
</dbReference>
<dbReference type="FunCoup" id="G5EDW7">
    <property type="interactions" value="997"/>
</dbReference>
<dbReference type="IntAct" id="G5EDW7">
    <property type="interactions" value="2"/>
</dbReference>
<dbReference type="STRING" id="6239.B0454.1.1"/>
<dbReference type="PaxDb" id="6239-B0454.1"/>
<dbReference type="PeptideAtlas" id="G5EDW7"/>
<dbReference type="EnsemblMetazoa" id="B0454.1.1">
    <property type="protein sequence ID" value="B0454.1.1"/>
    <property type="gene ID" value="WBGene00002997"/>
</dbReference>
<dbReference type="GeneID" id="173652"/>
<dbReference type="KEGG" id="cel:CELE_B0454.1"/>
<dbReference type="AGR" id="WB:WBGene00002997"/>
<dbReference type="CTD" id="173652"/>
<dbReference type="WormBase" id="B0454.1">
    <property type="protein sequence ID" value="CE20455"/>
    <property type="gene ID" value="WBGene00002997"/>
    <property type="gene designation" value="lin-8"/>
</dbReference>
<dbReference type="eggNOG" id="ENOG502THHU">
    <property type="taxonomic scope" value="Eukaryota"/>
</dbReference>
<dbReference type="GeneTree" id="ENSGT00390000006206"/>
<dbReference type="HOGENOM" id="CLU_055340_0_0_1"/>
<dbReference type="InParanoid" id="G5EDW7"/>
<dbReference type="OMA" id="REHTQHW"/>
<dbReference type="OrthoDB" id="5809664at2759"/>
<dbReference type="PhylomeDB" id="G5EDW7"/>
<dbReference type="PRO" id="PR:G5EDW7"/>
<dbReference type="Proteomes" id="UP000001940">
    <property type="component" value="Chromosome II"/>
</dbReference>
<dbReference type="Bgee" id="WBGene00002997">
    <property type="expression patterns" value="Expressed in embryo and 4 other cell types or tissues"/>
</dbReference>
<dbReference type="GO" id="GO:0005634">
    <property type="term" value="C:nucleus"/>
    <property type="evidence" value="ECO:0000314"/>
    <property type="project" value="WormBase"/>
</dbReference>
<dbReference type="GO" id="GO:0040027">
    <property type="term" value="P:negative regulation of vulval development"/>
    <property type="evidence" value="ECO:0000316"/>
    <property type="project" value="WormBase"/>
</dbReference>
<dbReference type="InterPro" id="IPR005020">
    <property type="entry name" value="LIN-8"/>
</dbReference>
<dbReference type="PANTHER" id="PTHR32020:SF3">
    <property type="entry name" value="ARID DOMAIN-CONTAINING PROTEIN-RELATED"/>
    <property type="match status" value="1"/>
</dbReference>
<dbReference type="PANTHER" id="PTHR32020">
    <property type="entry name" value="LIN-8 DOMAIN CONTAINING-RELATED"/>
    <property type="match status" value="1"/>
</dbReference>
<dbReference type="Pfam" id="PF03353">
    <property type="entry name" value="Lin-8"/>
    <property type="match status" value="1"/>
</dbReference>